<comment type="cofactor">
    <cofactor evidence="3">
        <name>Zn(2+)</name>
        <dbReference type="ChEBI" id="CHEBI:29105"/>
    </cofactor>
    <text evidence="3">Binds 1 zinc ion per subunit.</text>
</comment>
<comment type="similarity">
    <text evidence="3">Belongs to the dictomallein family.</text>
</comment>
<protein>
    <recommendedName>
        <fullName>Dictomallein</fullName>
        <ecNumber>3.4.24.-</ecNumber>
    </recommendedName>
</protein>
<feature type="chain" id="PRO_0000322652" description="Dictomallein">
    <location>
        <begin position="1"/>
        <end position="687"/>
    </location>
</feature>
<feature type="domain" description="Peptidase M66">
    <location>
        <begin position="233"/>
        <end position="501"/>
    </location>
</feature>
<feature type="region of interest" description="Disordered" evidence="2">
    <location>
        <begin position="1"/>
        <end position="45"/>
    </location>
</feature>
<feature type="region of interest" description="Disordered" evidence="2">
    <location>
        <begin position="73"/>
        <end position="112"/>
    </location>
</feature>
<feature type="active site" evidence="1">
    <location>
        <position position="394"/>
    </location>
</feature>
<feature type="binding site" evidence="1">
    <location>
        <position position="393"/>
    </location>
    <ligand>
        <name>Zn(2+)</name>
        <dbReference type="ChEBI" id="CHEBI:29105"/>
        <note>catalytic</note>
    </ligand>
</feature>
<feature type="binding site" evidence="1">
    <location>
        <position position="397"/>
    </location>
    <ligand>
        <name>Zn(2+)</name>
        <dbReference type="ChEBI" id="CHEBI:29105"/>
        <note>catalytic</note>
    </ligand>
</feature>
<feature type="binding site" evidence="1">
    <location>
        <position position="403"/>
    </location>
    <ligand>
        <name>Zn(2+)</name>
        <dbReference type="ChEBI" id="CHEBI:29105"/>
        <note>catalytic</note>
    </ligand>
</feature>
<keyword id="KW-0378">Hydrolase</keyword>
<keyword id="KW-0479">Metal-binding</keyword>
<keyword id="KW-0482">Metalloprotease</keyword>
<keyword id="KW-0645">Protease</keyword>
<keyword id="KW-0862">Zinc</keyword>
<sequence>MGNGERPPARRPDSSGSPPPAADAPAASNHPFSSHDTKHMTSRRLASRTAVAASLSALMLAACGGDDSANAPTAGGAAPLTPAVASPAGPTGSTPGSTPGATTAPAPSSTSAGQLSVDKMAFAQTHVVPSGGLSWTLPNASASLRPISRRDALVLVAIGQADAVQPVLEAWKDGAKLGALALSPPSALPPTESGGRAYANDRWSAVVPAAWMVPGVSFSVSASNYTSSVAQAPVFGTDADVQLTILPFYLFGADDTNSPPLSTTQAPDAATQQEIFAKWPTAELKVRTHPAGRFSLATVVVGPRADRTGAAQPAYPVTALDQQKDGYGVMSAMLTLITNMRTANGDGPLNDQYYAPLIALNSNGQFANLGGGLGGVGSGAAVGDHRYTGIFIHEQGHAFGLNHAGDEYAKGAYPYAGGSLSGSVWGYDPNHREFLDVLVPTTASSYAKCASSHQLDAQGRCYKQDPMQGGAGDQSSGYKFATFSDYNTGRMQAWIASRVLADPASSTGYSKWDSAAQARAPYTPTTDNNGLYGVNQNLPVQAGVPVHTIVVSFSKAGSAGASYIYPPFSYTGNLIATFDPTSAADRQAITVDKGTYPWYCKGTGCDYTLRVTYADGSRTYRVLQGGFRAWWTPTVYDANATNPLSGSSFRVWAINVPGDKRIGKIELLDTPMVWNGMPANPTVLLSR</sequence>
<organism>
    <name type="scientific">Burkholderia mallei (strain NCTC 10229)</name>
    <dbReference type="NCBI Taxonomy" id="412022"/>
    <lineage>
        <taxon>Bacteria</taxon>
        <taxon>Pseudomonadati</taxon>
        <taxon>Pseudomonadota</taxon>
        <taxon>Betaproteobacteria</taxon>
        <taxon>Burkholderiales</taxon>
        <taxon>Burkholderiaceae</taxon>
        <taxon>Burkholderia</taxon>
        <taxon>pseudomallei group</taxon>
    </lineage>
</organism>
<proteinExistence type="inferred from homology"/>
<reference key="1">
    <citation type="journal article" date="2010" name="Genome Biol. Evol.">
        <title>Continuing evolution of Burkholderia mallei through genome reduction and large-scale rearrangements.</title>
        <authorList>
            <person name="Losada L."/>
            <person name="Ronning C.M."/>
            <person name="DeShazer D."/>
            <person name="Woods D."/>
            <person name="Fedorova N."/>
            <person name="Kim H.S."/>
            <person name="Shabalina S.A."/>
            <person name="Pearson T.R."/>
            <person name="Brinkac L."/>
            <person name="Tan P."/>
            <person name="Nandi T."/>
            <person name="Crabtree J."/>
            <person name="Badger J."/>
            <person name="Beckstrom-Sternberg S."/>
            <person name="Saqib M."/>
            <person name="Schutzer S.E."/>
            <person name="Keim P."/>
            <person name="Nierman W.C."/>
        </authorList>
    </citation>
    <scope>NUCLEOTIDE SEQUENCE [LARGE SCALE GENOMIC DNA]</scope>
    <source>
        <strain>NCTC 10229</strain>
    </source>
</reference>
<name>DTML_BURM9</name>
<evidence type="ECO:0000250" key="1"/>
<evidence type="ECO:0000256" key="2">
    <source>
        <dbReference type="SAM" id="MobiDB-lite"/>
    </source>
</evidence>
<evidence type="ECO:0000305" key="3"/>
<accession>A2RWR9</accession>
<dbReference type="EC" id="3.4.24.-"/>
<dbReference type="EMBL" id="CP000545">
    <property type="protein sequence ID" value="ABN00035.2"/>
    <property type="molecule type" value="Genomic_DNA"/>
</dbReference>
<dbReference type="RefSeq" id="WP_004198081.1">
    <property type="nucleotide sequence ID" value="NC_008835.1"/>
</dbReference>
<dbReference type="SMR" id="A2RWR9"/>
<dbReference type="KEGG" id="bml:BMA10229_0314"/>
<dbReference type="HOGENOM" id="CLU_451780_0_0_4"/>
<dbReference type="Proteomes" id="UP000002283">
    <property type="component" value="Chromosome II"/>
</dbReference>
<dbReference type="GO" id="GO:0046872">
    <property type="term" value="F:metal ion binding"/>
    <property type="evidence" value="ECO:0007669"/>
    <property type="project" value="UniProtKB-KW"/>
</dbReference>
<dbReference type="GO" id="GO:0004222">
    <property type="term" value="F:metalloendopeptidase activity"/>
    <property type="evidence" value="ECO:0007669"/>
    <property type="project" value="InterPro"/>
</dbReference>
<dbReference type="GO" id="GO:0006508">
    <property type="term" value="P:proteolysis"/>
    <property type="evidence" value="ECO:0007669"/>
    <property type="project" value="UniProtKB-KW"/>
</dbReference>
<dbReference type="InterPro" id="IPR051256">
    <property type="entry name" value="Dictomallein"/>
</dbReference>
<dbReference type="InterPro" id="IPR019503">
    <property type="entry name" value="Peptidase_M66_dom"/>
</dbReference>
<dbReference type="PANTHER" id="PTHR39540">
    <property type="match status" value="1"/>
</dbReference>
<dbReference type="PANTHER" id="PTHR39540:SF1">
    <property type="entry name" value="DICTOMALLEIN-1-RELATED"/>
    <property type="match status" value="1"/>
</dbReference>
<dbReference type="Pfam" id="PF10462">
    <property type="entry name" value="Peptidase_M66"/>
    <property type="match status" value="1"/>
</dbReference>
<dbReference type="SUPFAM" id="SSF55486">
    <property type="entry name" value="Metalloproteases ('zincins'), catalytic domain"/>
    <property type="match status" value="1"/>
</dbReference>
<dbReference type="PROSITE" id="PS51694">
    <property type="entry name" value="PEPTIDASE_M66"/>
    <property type="match status" value="1"/>
</dbReference>
<gene>
    <name type="primary">dtmL</name>
    <name type="ordered locus">BMA10229_0314</name>
</gene>